<accession>P08823</accession>
<protein>
    <recommendedName>
        <fullName>RuBisCO large subunit-binding protein subunit alpha, chloroplastic</fullName>
    </recommendedName>
    <alternativeName>
        <fullName>60 kDa chaperonin subunit alpha</fullName>
    </alternativeName>
    <alternativeName>
        <fullName>CPN-60 alpha</fullName>
    </alternativeName>
</protein>
<comment type="function">
    <text>This protein binds RuBisCO small and large subunits and is implicated in the assembly of the enzyme oligomer.</text>
</comment>
<comment type="subunit">
    <text>Oligomer of probably six alpha and six beta subunits.</text>
</comment>
<comment type="subcellular location">
    <subcellularLocation>
        <location>Plastid</location>
        <location>Chloroplast</location>
    </subcellularLocation>
</comment>
<comment type="miscellaneous">
    <text>This protein shows ATPase activity.</text>
</comment>
<comment type="similarity">
    <text evidence="2">Belongs to the chaperonin (HSP60) family.</text>
</comment>
<organism>
    <name type="scientific">Triticum aestivum</name>
    <name type="common">Wheat</name>
    <dbReference type="NCBI Taxonomy" id="4565"/>
    <lineage>
        <taxon>Eukaryota</taxon>
        <taxon>Viridiplantae</taxon>
        <taxon>Streptophyta</taxon>
        <taxon>Embryophyta</taxon>
        <taxon>Tracheophyta</taxon>
        <taxon>Spermatophyta</taxon>
        <taxon>Magnoliopsida</taxon>
        <taxon>Liliopsida</taxon>
        <taxon>Poales</taxon>
        <taxon>Poaceae</taxon>
        <taxon>BOP clade</taxon>
        <taxon>Pooideae</taxon>
        <taxon>Triticodae</taxon>
        <taxon>Triticeae</taxon>
        <taxon>Triticinae</taxon>
        <taxon>Triticum</taxon>
    </lineage>
</organism>
<dbReference type="EMBL" id="X07851">
    <property type="protein sequence ID" value="CAA30699.1"/>
    <property type="molecule type" value="mRNA"/>
</dbReference>
<dbReference type="PIR" id="S02198">
    <property type="entry name" value="HHWTBA"/>
</dbReference>
<dbReference type="SMR" id="P08823"/>
<dbReference type="STRING" id="4565.P08823"/>
<dbReference type="PaxDb" id="4565-Traes_2AS_C1EA81EC4.2"/>
<dbReference type="eggNOG" id="KOG0356">
    <property type="taxonomic scope" value="Eukaryota"/>
</dbReference>
<dbReference type="Proteomes" id="UP000019116">
    <property type="component" value="Unplaced"/>
</dbReference>
<dbReference type="ExpressionAtlas" id="P08823">
    <property type="expression patterns" value="baseline and differential"/>
</dbReference>
<dbReference type="GO" id="GO:0009507">
    <property type="term" value="C:chloroplast"/>
    <property type="evidence" value="ECO:0007669"/>
    <property type="project" value="UniProtKB-SubCell"/>
</dbReference>
<dbReference type="GO" id="GO:0005524">
    <property type="term" value="F:ATP binding"/>
    <property type="evidence" value="ECO:0007669"/>
    <property type="project" value="UniProtKB-KW"/>
</dbReference>
<dbReference type="GO" id="GO:0140662">
    <property type="term" value="F:ATP-dependent protein folding chaperone"/>
    <property type="evidence" value="ECO:0007669"/>
    <property type="project" value="InterPro"/>
</dbReference>
<dbReference type="GO" id="GO:0006457">
    <property type="term" value="P:protein folding"/>
    <property type="evidence" value="ECO:0000318"/>
    <property type="project" value="GO_Central"/>
</dbReference>
<dbReference type="GO" id="GO:0042026">
    <property type="term" value="P:protein refolding"/>
    <property type="evidence" value="ECO:0007669"/>
    <property type="project" value="InterPro"/>
</dbReference>
<dbReference type="CDD" id="cd03344">
    <property type="entry name" value="GroEL"/>
    <property type="match status" value="1"/>
</dbReference>
<dbReference type="FunFam" id="3.50.7.10:FF:000001">
    <property type="entry name" value="60 kDa chaperonin"/>
    <property type="match status" value="1"/>
</dbReference>
<dbReference type="Gene3D" id="3.50.7.10">
    <property type="entry name" value="GroEL"/>
    <property type="match status" value="1"/>
</dbReference>
<dbReference type="Gene3D" id="1.10.560.10">
    <property type="entry name" value="GroEL-like equatorial domain"/>
    <property type="match status" value="1"/>
</dbReference>
<dbReference type="Gene3D" id="3.30.260.10">
    <property type="entry name" value="TCP-1-like chaperonin intermediate domain"/>
    <property type="match status" value="1"/>
</dbReference>
<dbReference type="HAMAP" id="MF_00600">
    <property type="entry name" value="CH60"/>
    <property type="match status" value="1"/>
</dbReference>
<dbReference type="InterPro" id="IPR018370">
    <property type="entry name" value="Chaperonin_Cpn60_CS"/>
</dbReference>
<dbReference type="InterPro" id="IPR001844">
    <property type="entry name" value="Cpn60/GroEL"/>
</dbReference>
<dbReference type="InterPro" id="IPR002423">
    <property type="entry name" value="Cpn60/GroEL/TCP-1"/>
</dbReference>
<dbReference type="InterPro" id="IPR027409">
    <property type="entry name" value="GroEL-like_apical_dom_sf"/>
</dbReference>
<dbReference type="InterPro" id="IPR027413">
    <property type="entry name" value="GROEL-like_equatorial_sf"/>
</dbReference>
<dbReference type="InterPro" id="IPR027410">
    <property type="entry name" value="TCP-1-like_intermed_sf"/>
</dbReference>
<dbReference type="NCBIfam" id="TIGR02348">
    <property type="entry name" value="GroEL"/>
    <property type="match status" value="1"/>
</dbReference>
<dbReference type="NCBIfam" id="NF000592">
    <property type="entry name" value="PRK00013.1"/>
    <property type="match status" value="1"/>
</dbReference>
<dbReference type="NCBIfam" id="NF009487">
    <property type="entry name" value="PRK12849.1"/>
    <property type="match status" value="1"/>
</dbReference>
<dbReference type="NCBIfam" id="NF009488">
    <property type="entry name" value="PRK12850.1"/>
    <property type="match status" value="1"/>
</dbReference>
<dbReference type="NCBIfam" id="NF009489">
    <property type="entry name" value="PRK12851.1"/>
    <property type="match status" value="1"/>
</dbReference>
<dbReference type="PANTHER" id="PTHR45633">
    <property type="entry name" value="60 KDA HEAT SHOCK PROTEIN, MITOCHONDRIAL"/>
    <property type="match status" value="1"/>
</dbReference>
<dbReference type="Pfam" id="PF00118">
    <property type="entry name" value="Cpn60_TCP1"/>
    <property type="match status" value="1"/>
</dbReference>
<dbReference type="PRINTS" id="PR00298">
    <property type="entry name" value="CHAPERONIN60"/>
</dbReference>
<dbReference type="SUPFAM" id="SSF52029">
    <property type="entry name" value="GroEL apical domain-like"/>
    <property type="match status" value="1"/>
</dbReference>
<dbReference type="SUPFAM" id="SSF48592">
    <property type="entry name" value="GroEL equatorial domain-like"/>
    <property type="match status" value="1"/>
</dbReference>
<dbReference type="SUPFAM" id="SSF54849">
    <property type="entry name" value="GroEL-intermediate domain like"/>
    <property type="match status" value="1"/>
</dbReference>
<dbReference type="PROSITE" id="PS00296">
    <property type="entry name" value="CHAPERONINS_CPN60"/>
    <property type="match status" value="1"/>
</dbReference>
<name>RUBA_WHEAT</name>
<sequence length="543" mass="57521">GADAKEIAFDQKSRAALQAGVEKLANAVGVTLGPRGRNVVLDEYGNPKVVNDGVTIARAIELANPMENAGAALIREVASKTNDSAGDGTTTACVLAREIIKLGILSVTSGANPVSLKKGIDKTVQGLIEELERKARPVKGSGDIKAVASISAGNDELIGAMIADAIDKVGPDGVLSIESSSSFETTVDVEEGMEIDRGYISPQFVTNLEKSIVEFENARVLITDQKITSIKEIIPLLEQTTQLRCPLFIVAEDITGEALATLVVNKLRGIINVAAIKAPSFGERRKAVLQDIAIVTGAEYLAKDLGLLVENATVDQLGTARKITIHQTTTTLIADAASKDEIQARVAQLKKELSETDSIYDSEKLAERIAKLSGGVAVIKVGATTETELEDRQLRIEDAKNATFAAIEEGIVPGGGAAYVHLSTYVPAIKETIEDHDERLGADIIQKALQAPASLIANNAGVEGEVVIEKIKESEWEMGYNAMTDKYENLIESGVIDPAKVTRCALQNAASVSGMVLTTQAIVVEKPKPKPKVAEPAEGQLSV</sequence>
<proteinExistence type="evidence at protein level"/>
<keyword id="KW-0067">ATP-binding</keyword>
<keyword id="KW-0143">Chaperone</keyword>
<keyword id="KW-0150">Chloroplast</keyword>
<keyword id="KW-0903">Direct protein sequencing</keyword>
<keyword id="KW-0547">Nucleotide-binding</keyword>
<keyword id="KW-0934">Plastid</keyword>
<keyword id="KW-1185">Reference proteome</keyword>
<keyword id="KW-0809">Transit peptide</keyword>
<evidence type="ECO:0000269" key="1">
    <source>
    </source>
</evidence>
<evidence type="ECO:0000305" key="2"/>
<feature type="transit peptide" description="Chloroplast" evidence="1">
    <location>
        <begin position="1" status="less than"/>
        <end position="2"/>
    </location>
</feature>
<feature type="chain" id="PRO_0000005021" description="RuBisCO large subunit-binding protein subunit alpha, chloroplastic">
    <location>
        <begin position="3"/>
        <end position="543"/>
    </location>
</feature>
<feature type="sequence conflict" description="In Ref. 1; AA sequence." evidence="2" ref="1">
    <original>K</original>
    <variation>P</variation>
    <location>
        <position position="5"/>
    </location>
</feature>
<feature type="sequence conflict" description="In Ref. 1; AA sequence." evidence="2" ref="1">
    <original>K</original>
    <variation>G</variation>
    <location>
        <position position="12"/>
    </location>
</feature>
<feature type="non-terminal residue">
    <location>
        <position position="1"/>
    </location>
</feature>
<reference key="1">
    <citation type="journal article" date="1988" name="Nature">
        <title>Homologous plant and bacterial proteins chaperone oligomeric protein assembly.</title>
        <authorList>
            <person name="Hemmingsen S.M."/>
            <person name="Woolford C."/>
            <person name="van der Vies S.M."/>
            <person name="Tilly K."/>
            <person name="Dennis D.T."/>
            <person name="Georgopoulos C."/>
            <person name="Hendrix R.W."/>
            <person name="Ellis R.J."/>
        </authorList>
    </citation>
    <scope>NUCLEOTIDE SEQUENCE [MRNA]</scope>
    <scope>PROTEIN SEQUENCE OF 3-22</scope>
    <source>
        <tissue>Seed</tissue>
    </source>
</reference>